<comment type="function">
    <text>Produces a single-strand nick in a specific site of the plasmid, and this nick results in single-strand replication by rolling circle mechanism.</text>
</comment>
<comment type="similarity">
    <text evidence="2">Belongs to the Gram-positive plasmids replication protein type 1 family.</text>
</comment>
<protein>
    <recommendedName>
        <fullName>Protein rep</fullName>
    </recommendedName>
    <alternativeName>
        <fullName>Replication protein</fullName>
    </alternativeName>
</protein>
<proteinExistence type="inferred from homology"/>
<sequence>MSEIFEDKTENGKVRPWRERKIENVRYAEYLAILEFKRAHDVRGCGEVLRFRKIGEHLKLYQTWFCHKRLCPLCNWRRSMKNSSQLKQIIAEAVAREPKGRFLFLTLTVKNAHSAEELKVSLRALTKAFNKLTRYKKVTKNLLGYLRSTEITVNEQDGSYNQHLHVLLFVKSSYFKNSNNYLAQAEWAKLWQKALKVDYEPVVHVQAVKANKRKGTDSLQASAEETAKYEVKSADYMTADDERNLVVIKNLEYALAGTRQISYGGLLKQIKQDLKLEDVENGDLVHVGDEDYTKEQMEAAEEVVAKWDFNKQNYFIW</sequence>
<reference key="1">
    <citation type="journal article" date="1989" name="Plasmid">
        <title>Structural organization of pLP1, a cryptic plasmid from Lactobacillus plantarum CCM 1904.</title>
        <authorList>
            <person name="Bouia A."/>
            <person name="Bringel F."/>
            <person name="Frey L."/>
            <person name="Kammerer B."/>
            <person name="Belarbi A."/>
            <person name="Guyonvarch A."/>
            <person name="Hubert J.-C."/>
        </authorList>
    </citation>
    <scope>NUCLEOTIDE SEQUENCE [GENOMIC DNA]</scope>
    <source>
        <strain>ATCC 8014 / DSM 20205 / CCM 1904 / CCUG 11253 / NCDO 82 / NCIMB 6376 / 17-5</strain>
    </source>
</reference>
<geneLocation type="plasmid">
    <name>pLP1</name>
</geneLocation>
<name>REP_LACPN</name>
<organism>
    <name type="scientific">Lactiplantibacillus plantarum</name>
    <name type="common">Lactobacillus plantarum</name>
    <dbReference type="NCBI Taxonomy" id="1590"/>
    <lineage>
        <taxon>Bacteria</taxon>
        <taxon>Bacillati</taxon>
        <taxon>Bacillota</taxon>
        <taxon>Bacilli</taxon>
        <taxon>Lactobacillales</taxon>
        <taxon>Lactobacillaceae</taxon>
        <taxon>Lactiplantibacillus</taxon>
    </lineage>
</organism>
<accession>P16953</accession>
<gene>
    <name type="primary">rep</name>
</gene>
<feature type="chain" id="PRO_0000068321" description="Protein rep">
    <location>
        <begin position="1"/>
        <end position="317"/>
    </location>
</feature>
<feature type="binding site" evidence="1">
    <location>
        <position position="229"/>
    </location>
    <ligand>
        <name>DNA</name>
        <dbReference type="ChEBI" id="CHEBI:16991"/>
    </ligand>
</feature>
<dbReference type="EMBL" id="M31223">
    <property type="protein sequence ID" value="AAA98164.1"/>
    <property type="molecule type" value="Genomic_DNA"/>
</dbReference>
<dbReference type="RefSeq" id="WP_012569251.1">
    <property type="nucleotide sequence ID" value="NC_011497.1"/>
</dbReference>
<dbReference type="RefSeq" id="YP_002300640.1">
    <property type="nucleotide sequence ID" value="NC_011497.1"/>
</dbReference>
<dbReference type="GO" id="GO:0003677">
    <property type="term" value="F:DNA binding"/>
    <property type="evidence" value="ECO:0007669"/>
    <property type="project" value="InterPro"/>
</dbReference>
<dbReference type="GO" id="GO:0006260">
    <property type="term" value="P:DNA replication"/>
    <property type="evidence" value="ECO:0007669"/>
    <property type="project" value="UniProtKB-KW"/>
</dbReference>
<dbReference type="InterPro" id="IPR000989">
    <property type="entry name" value="Rep"/>
</dbReference>
<dbReference type="Pfam" id="PF01446">
    <property type="entry name" value="Rep_1"/>
    <property type="match status" value="1"/>
</dbReference>
<keyword id="KW-0235">DNA replication</keyword>
<keyword id="KW-0614">Plasmid</keyword>
<evidence type="ECO:0000250" key="1"/>
<evidence type="ECO:0000305" key="2"/>